<protein>
    <recommendedName>
        <fullName evidence="4">Probable beta-1,4-xylosyltransferase GT43A</fullName>
        <ecNumber evidence="4">2.4.2.-</ecNumber>
    </recommendedName>
    <alternativeName>
        <fullName evidence="3">OsGT43A</fullName>
    </alternativeName>
    <alternativeName>
        <fullName evidence="4">Probable glucuronosyltransferase Os05g0123100</fullName>
    </alternativeName>
</protein>
<gene>
    <name evidence="3" type="primary">GT43A</name>
    <name evidence="8" type="ordered locus">Os05g0123100</name>
    <name evidence="4" type="ordered locus">LOC_Os05g03174</name>
    <name evidence="7" type="ORF">OJ1729_E02.10</name>
    <name evidence="6" type="ORF">P0008A07.2</name>
</gene>
<accession>Q75L84</accession>
<accession>A0A023ND31</accession>
<proteinExistence type="evidence at transcript level"/>
<name>GT43A_ORYSJ</name>
<evidence type="ECO:0000255" key="1"/>
<evidence type="ECO:0000269" key="2">
    <source>
    </source>
</evidence>
<evidence type="ECO:0000303" key="3">
    <source>
    </source>
</evidence>
<evidence type="ECO:0000305" key="4"/>
<evidence type="ECO:0000305" key="5">
    <source>
    </source>
</evidence>
<evidence type="ECO:0000312" key="6">
    <source>
        <dbReference type="EMBL" id="AAV33308.1"/>
    </source>
</evidence>
<evidence type="ECO:0000312" key="7">
    <source>
        <dbReference type="EMBL" id="AHW98781.1"/>
    </source>
</evidence>
<evidence type="ECO:0000312" key="8">
    <source>
        <dbReference type="EMBL" id="BAS92047.1"/>
    </source>
</evidence>
<dbReference type="EC" id="2.4.2.-" evidence="4"/>
<dbReference type="EMBL" id="KJ206898">
    <property type="protein sequence ID" value="AHW98781.1"/>
    <property type="molecule type" value="mRNA"/>
</dbReference>
<dbReference type="EMBL" id="AC079021">
    <property type="protein sequence ID" value="AAV33308.1"/>
    <property type="molecule type" value="Genomic_DNA"/>
</dbReference>
<dbReference type="EMBL" id="AC093089">
    <property type="protein sequence ID" value="AAS72361.1"/>
    <property type="molecule type" value="Genomic_DNA"/>
</dbReference>
<dbReference type="EMBL" id="AP008211">
    <property type="protein sequence ID" value="BAF16424.1"/>
    <property type="molecule type" value="Genomic_DNA"/>
</dbReference>
<dbReference type="EMBL" id="AP014961">
    <property type="protein sequence ID" value="BAS92047.1"/>
    <property type="molecule type" value="Genomic_DNA"/>
</dbReference>
<dbReference type="EMBL" id="AK120892">
    <property type="protein sequence ID" value="BAH00218.1"/>
    <property type="molecule type" value="mRNA"/>
</dbReference>
<dbReference type="RefSeq" id="XP_015640167.1">
    <property type="nucleotide sequence ID" value="XM_015784681.1"/>
</dbReference>
<dbReference type="SMR" id="Q75L84"/>
<dbReference type="FunCoup" id="Q75L84">
    <property type="interactions" value="550"/>
</dbReference>
<dbReference type="STRING" id="39947.Q75L84"/>
<dbReference type="CAZy" id="GT43">
    <property type="family name" value="Glycosyltransferase Family 43"/>
</dbReference>
<dbReference type="GlyCosmos" id="Q75L84">
    <property type="glycosylation" value="2 sites, No reported glycans"/>
</dbReference>
<dbReference type="PaxDb" id="39947-Q75L84"/>
<dbReference type="EnsemblPlants" id="Os05t0123100-01">
    <property type="protein sequence ID" value="Os05t0123100-01"/>
    <property type="gene ID" value="Os05g0123100"/>
</dbReference>
<dbReference type="Gramene" id="Os05t0123100-01">
    <property type="protein sequence ID" value="Os05t0123100-01"/>
    <property type="gene ID" value="Os05g0123100"/>
</dbReference>
<dbReference type="KEGG" id="dosa:Os05g0123100"/>
<dbReference type="eggNOG" id="KOG1476">
    <property type="taxonomic scope" value="Eukaryota"/>
</dbReference>
<dbReference type="HOGENOM" id="CLU_044006_2_0_1"/>
<dbReference type="InParanoid" id="Q75L84"/>
<dbReference type="OMA" id="PPLIHIS"/>
<dbReference type="OrthoDB" id="675023at2759"/>
<dbReference type="PlantReactome" id="R-OSA-5654909">
    <property type="pathway name" value="Xylan biosynthesis"/>
</dbReference>
<dbReference type="Proteomes" id="UP000000763">
    <property type="component" value="Chromosome 5"/>
</dbReference>
<dbReference type="Proteomes" id="UP000059680">
    <property type="component" value="Chromosome 5"/>
</dbReference>
<dbReference type="GO" id="GO:0000139">
    <property type="term" value="C:Golgi membrane"/>
    <property type="evidence" value="ECO:0000314"/>
    <property type="project" value="UniProtKB"/>
</dbReference>
<dbReference type="GO" id="GO:0015018">
    <property type="term" value="F:galactosylgalactosylxylosylprotein 3-beta-glucuronosyltransferase activity"/>
    <property type="evidence" value="ECO:0007669"/>
    <property type="project" value="InterPro"/>
</dbReference>
<dbReference type="GO" id="GO:0042285">
    <property type="term" value="F:xylosyltransferase activity"/>
    <property type="evidence" value="ECO:0000318"/>
    <property type="project" value="GO_Central"/>
</dbReference>
<dbReference type="GO" id="GO:0071555">
    <property type="term" value="P:cell wall organization"/>
    <property type="evidence" value="ECO:0007669"/>
    <property type="project" value="UniProtKB-KW"/>
</dbReference>
<dbReference type="GO" id="GO:0010417">
    <property type="term" value="P:glucuronoxylan biosynthetic process"/>
    <property type="evidence" value="ECO:0000318"/>
    <property type="project" value="GO_Central"/>
</dbReference>
<dbReference type="GO" id="GO:0009834">
    <property type="term" value="P:plant-type secondary cell wall biogenesis"/>
    <property type="evidence" value="ECO:0000318"/>
    <property type="project" value="GO_Central"/>
</dbReference>
<dbReference type="GO" id="GO:0045492">
    <property type="term" value="P:xylan biosynthetic process"/>
    <property type="evidence" value="ECO:0000314"/>
    <property type="project" value="UniProtKB"/>
</dbReference>
<dbReference type="FunFam" id="3.90.550.10:FF:000084">
    <property type="entry name" value="Glycosyltransferases"/>
    <property type="match status" value="1"/>
</dbReference>
<dbReference type="Gene3D" id="3.90.550.10">
    <property type="entry name" value="Spore Coat Polysaccharide Biosynthesis Protein SpsA, Chain A"/>
    <property type="match status" value="1"/>
</dbReference>
<dbReference type="InterPro" id="IPR005027">
    <property type="entry name" value="Glyco_trans_43"/>
</dbReference>
<dbReference type="InterPro" id="IPR029044">
    <property type="entry name" value="Nucleotide-diphossugar_trans"/>
</dbReference>
<dbReference type="PANTHER" id="PTHR10896:SF59">
    <property type="entry name" value="BETA-1,4-XYLOSYLTRANSFERASE IRX9"/>
    <property type="match status" value="1"/>
</dbReference>
<dbReference type="PANTHER" id="PTHR10896">
    <property type="entry name" value="GALACTOSYLGALACTOSYLXYLOSYLPROTEIN 3-BETA-GLUCURONOSYLTRANSFERASE BETA-1,3-GLUCURONYLTRANSFERASE"/>
    <property type="match status" value="1"/>
</dbReference>
<dbReference type="Pfam" id="PF03360">
    <property type="entry name" value="Glyco_transf_43"/>
    <property type="match status" value="1"/>
</dbReference>
<dbReference type="SUPFAM" id="SSF53448">
    <property type="entry name" value="Nucleotide-diphospho-sugar transferases"/>
    <property type="match status" value="1"/>
</dbReference>
<feature type="chain" id="PRO_0000407558" description="Probable beta-1,4-xylosyltransferase GT43A">
    <location>
        <begin position="1"/>
        <end position="371"/>
    </location>
</feature>
<feature type="topological domain" description="Cytoplasmic" evidence="4">
    <location>
        <begin position="1"/>
        <end position="19"/>
    </location>
</feature>
<feature type="transmembrane region" description="Helical; Signal-anchor for type II membrane protein" evidence="1">
    <location>
        <begin position="20"/>
        <end position="42"/>
    </location>
</feature>
<feature type="topological domain" description="Lumenal" evidence="4">
    <location>
        <begin position="43"/>
        <end position="371"/>
    </location>
</feature>
<feature type="glycosylation site" description="N-linked (GlcNAc...) asparagine" evidence="1">
    <location>
        <position position="176"/>
    </location>
</feature>
<feature type="glycosylation site" description="N-linked (GlcNAc...) asparagine" evidence="1">
    <location>
        <position position="299"/>
    </location>
</feature>
<organism>
    <name type="scientific">Oryza sativa subsp. japonica</name>
    <name type="common">Rice</name>
    <dbReference type="NCBI Taxonomy" id="39947"/>
    <lineage>
        <taxon>Eukaryota</taxon>
        <taxon>Viridiplantae</taxon>
        <taxon>Streptophyta</taxon>
        <taxon>Embryophyta</taxon>
        <taxon>Tracheophyta</taxon>
        <taxon>Spermatophyta</taxon>
        <taxon>Magnoliopsida</taxon>
        <taxon>Liliopsida</taxon>
        <taxon>Poales</taxon>
        <taxon>Poaceae</taxon>
        <taxon>BOP clade</taxon>
        <taxon>Oryzoideae</taxon>
        <taxon>Oryzeae</taxon>
        <taxon>Oryzinae</taxon>
        <taxon>Oryza</taxon>
        <taxon>Oryza sativa</taxon>
    </lineage>
</organism>
<comment type="function">
    <text evidence="2">Probable beta-1,4-xylosyltransferase involved in xylan biosynthesis in cell walls.</text>
</comment>
<comment type="subcellular location">
    <subcellularLocation>
        <location evidence="2">Golgi apparatus membrane</location>
        <topology evidence="5">Single-pass type II membrane protein</topology>
    </subcellularLocation>
</comment>
<comment type="similarity">
    <text evidence="4">Belongs to the glycosyltransferase 43 family.</text>
</comment>
<reference key="1">
    <citation type="journal article" date="2014" name="Plant Signal. Behav.">
        <title>Functional roles of rice glycosyltransferase family GT43 in xylan biosynthesis.</title>
        <authorList>
            <person name="Lee C."/>
            <person name="Teng Q."/>
            <person name="Zhong R."/>
            <person name="Yuan Y."/>
            <person name="Ye Z.H."/>
        </authorList>
    </citation>
    <scope>NUCLEOTIDE SEQUENCE [MRNA]</scope>
    <scope>FUNCTION</scope>
    <scope>SUBCELLULAR LOCATION</scope>
</reference>
<reference key="2">
    <citation type="journal article" date="2005" name="Mol. Genet. Genomics">
        <title>A fine physical map of the rice chromosome 5.</title>
        <authorList>
            <person name="Cheng C.-H."/>
            <person name="Chung M.C."/>
            <person name="Liu S.-M."/>
            <person name="Chen S.-K."/>
            <person name="Kao F.Y."/>
            <person name="Lin S.-J."/>
            <person name="Hsiao S.-H."/>
            <person name="Tseng I.C."/>
            <person name="Hsing Y.-I.C."/>
            <person name="Wu H.-P."/>
            <person name="Chen C.-S."/>
            <person name="Shaw J.-F."/>
            <person name="Wu J."/>
            <person name="Matsumoto T."/>
            <person name="Sasaki T."/>
            <person name="Chen H.-C."/>
            <person name="Chow T.-Y."/>
        </authorList>
    </citation>
    <scope>NUCLEOTIDE SEQUENCE [LARGE SCALE GENOMIC DNA]</scope>
    <source>
        <strain>cv. Nipponbare</strain>
    </source>
</reference>
<reference key="3">
    <citation type="journal article" date="2005" name="Nature">
        <title>The map-based sequence of the rice genome.</title>
        <authorList>
            <consortium name="International rice genome sequencing project (IRGSP)"/>
        </authorList>
    </citation>
    <scope>NUCLEOTIDE SEQUENCE [LARGE SCALE GENOMIC DNA]</scope>
    <source>
        <strain>cv. Nipponbare</strain>
    </source>
</reference>
<reference key="4">
    <citation type="journal article" date="2008" name="Nucleic Acids Res.">
        <title>The rice annotation project database (RAP-DB): 2008 update.</title>
        <authorList>
            <consortium name="The rice annotation project (RAP)"/>
        </authorList>
    </citation>
    <scope>GENOME REANNOTATION</scope>
    <source>
        <strain>cv. Nipponbare</strain>
    </source>
</reference>
<reference key="5">
    <citation type="journal article" date="2013" name="Rice">
        <title>Improvement of the Oryza sativa Nipponbare reference genome using next generation sequence and optical map data.</title>
        <authorList>
            <person name="Kawahara Y."/>
            <person name="de la Bastide M."/>
            <person name="Hamilton J.P."/>
            <person name="Kanamori H."/>
            <person name="McCombie W.R."/>
            <person name="Ouyang S."/>
            <person name="Schwartz D.C."/>
            <person name="Tanaka T."/>
            <person name="Wu J."/>
            <person name="Zhou S."/>
            <person name="Childs K.L."/>
            <person name="Davidson R.M."/>
            <person name="Lin H."/>
            <person name="Quesada-Ocampo L."/>
            <person name="Vaillancourt B."/>
            <person name="Sakai H."/>
            <person name="Lee S.S."/>
            <person name="Kim J."/>
            <person name="Numa H."/>
            <person name="Itoh T."/>
            <person name="Buell C.R."/>
            <person name="Matsumoto T."/>
        </authorList>
    </citation>
    <scope>GENOME REANNOTATION</scope>
    <source>
        <strain>cv. Nipponbare</strain>
    </source>
</reference>
<reference key="6">
    <citation type="journal article" date="2003" name="Science">
        <title>Collection, mapping, and annotation of over 28,000 cDNA clones from japonica rice.</title>
        <authorList>
            <consortium name="The rice full-length cDNA consortium"/>
        </authorList>
    </citation>
    <scope>NUCLEOTIDE SEQUENCE [LARGE SCALE MRNA]</scope>
    <source>
        <strain>cv. Nipponbare</strain>
    </source>
</reference>
<keyword id="KW-0961">Cell wall biogenesis/degradation</keyword>
<keyword id="KW-0325">Glycoprotein</keyword>
<keyword id="KW-0328">Glycosyltransferase</keyword>
<keyword id="KW-0333">Golgi apparatus</keyword>
<keyword id="KW-0472">Membrane</keyword>
<keyword id="KW-1185">Reference proteome</keyword>
<keyword id="KW-0735">Signal-anchor</keyword>
<keyword id="KW-0808">Transferase</keyword>
<keyword id="KW-0812">Transmembrane</keyword>
<keyword id="KW-1133">Transmembrane helix</keyword>
<sequence>MGTAAVAAAERPKQRRSSHLWKKALLHFSLCFVMGFFTGFAPSSSSSWRAGSGGGGGVQPRHQLAASHVAVNQQVSLVPDAAAAEAAGVGNGAVVDVGDDEGGEGARRMLIVVTTTRGERRRRRGELLRLAHTLRLVRPPVVWVVVEPAADAAATAEVLRGTGVMYRHLAFRPEENFTTADAEAHAQRNAALAHVEKHRLSGVVHFADAAGVYDAHFFDEIRQIEAFGTWPVATMSAGEKKVVVEGPLCSDSKVVGWFSRDFNDGTTRAVTYNTEADLNPAGAAGTRAHTIDVSGFAFNSSILWDPERWGRPTSLPDTSQDSIKFVQEVVLEDRTKLKGIPSDCSQIMVWQYTMPMQVHAQTSTPKTHNRR</sequence>